<proteinExistence type="evidence at protein level"/>
<evidence type="ECO:0000250" key="1">
    <source>
        <dbReference type="UniProtKB" id="P32378"/>
    </source>
</evidence>
<evidence type="ECO:0000255" key="2"/>
<evidence type="ECO:0000255" key="3">
    <source>
        <dbReference type="PROSITE-ProRule" id="PRU00498"/>
    </source>
</evidence>
<evidence type="ECO:0000269" key="4">
    <source>
    </source>
</evidence>
<evidence type="ECO:0000303" key="5">
    <source>
    </source>
</evidence>
<evidence type="ECO:0000305" key="6"/>
<evidence type="ECO:0000305" key="7">
    <source>
    </source>
</evidence>
<reference key="1">
    <citation type="journal article" date="2007" name="Science">
        <title>The Fusarium graminearum genome reveals a link between localized polymorphism and pathogen specialization.</title>
        <authorList>
            <person name="Cuomo C.A."/>
            <person name="Gueldener U."/>
            <person name="Xu J.-R."/>
            <person name="Trail F."/>
            <person name="Turgeon B.G."/>
            <person name="Di Pietro A."/>
            <person name="Walton J.D."/>
            <person name="Ma L.-J."/>
            <person name="Baker S.E."/>
            <person name="Rep M."/>
            <person name="Adam G."/>
            <person name="Antoniw J."/>
            <person name="Baldwin T."/>
            <person name="Calvo S.E."/>
            <person name="Chang Y.-L."/>
            <person name="DeCaprio D."/>
            <person name="Gale L.R."/>
            <person name="Gnerre S."/>
            <person name="Goswami R.S."/>
            <person name="Hammond-Kosack K."/>
            <person name="Harris L.J."/>
            <person name="Hilburn K."/>
            <person name="Kennell J.C."/>
            <person name="Kroken S."/>
            <person name="Magnuson J.K."/>
            <person name="Mannhaupt G."/>
            <person name="Mauceli E.W."/>
            <person name="Mewes H.-W."/>
            <person name="Mitterbauer R."/>
            <person name="Muehlbauer G."/>
            <person name="Muensterkoetter M."/>
            <person name="Nelson D."/>
            <person name="O'Donnell K."/>
            <person name="Ouellet T."/>
            <person name="Qi W."/>
            <person name="Quesneville H."/>
            <person name="Roncero M.I.G."/>
            <person name="Seong K.-Y."/>
            <person name="Tetko I.V."/>
            <person name="Urban M."/>
            <person name="Waalwijk C."/>
            <person name="Ward T.J."/>
            <person name="Yao J."/>
            <person name="Birren B.W."/>
            <person name="Kistler H.C."/>
        </authorList>
    </citation>
    <scope>NUCLEOTIDE SEQUENCE [LARGE SCALE GENOMIC DNA]</scope>
    <source>
        <strain>ATCC MYA-4620 / CBS 123657 / FGSC 9075 / NRRL 31084 / PH-1</strain>
    </source>
</reference>
<reference key="2">
    <citation type="journal article" date="2010" name="Nature">
        <title>Comparative genomics reveals mobile pathogenicity chromosomes in Fusarium.</title>
        <authorList>
            <person name="Ma L.-J."/>
            <person name="van der Does H.C."/>
            <person name="Borkovich K.A."/>
            <person name="Coleman J.J."/>
            <person name="Daboussi M.-J."/>
            <person name="Di Pietro A."/>
            <person name="Dufresne M."/>
            <person name="Freitag M."/>
            <person name="Grabherr M."/>
            <person name="Henrissat B."/>
            <person name="Houterman P.M."/>
            <person name="Kang S."/>
            <person name="Shim W.-B."/>
            <person name="Woloshuk C."/>
            <person name="Xie X."/>
            <person name="Xu J.-R."/>
            <person name="Antoniw J."/>
            <person name="Baker S.E."/>
            <person name="Bluhm B.H."/>
            <person name="Breakspear A."/>
            <person name="Brown D.W."/>
            <person name="Butchko R.A.E."/>
            <person name="Chapman S."/>
            <person name="Coulson R."/>
            <person name="Coutinho P.M."/>
            <person name="Danchin E.G.J."/>
            <person name="Diener A."/>
            <person name="Gale L.R."/>
            <person name="Gardiner D.M."/>
            <person name="Goff S."/>
            <person name="Hammond-Kosack K.E."/>
            <person name="Hilburn K."/>
            <person name="Hua-Van A."/>
            <person name="Jonkers W."/>
            <person name="Kazan K."/>
            <person name="Kodira C.D."/>
            <person name="Koehrsen M."/>
            <person name="Kumar L."/>
            <person name="Lee Y.-H."/>
            <person name="Li L."/>
            <person name="Manners J.M."/>
            <person name="Miranda-Saavedra D."/>
            <person name="Mukherjee M."/>
            <person name="Park G."/>
            <person name="Park J."/>
            <person name="Park S.-Y."/>
            <person name="Proctor R.H."/>
            <person name="Regev A."/>
            <person name="Ruiz-Roldan M.C."/>
            <person name="Sain D."/>
            <person name="Sakthikumar S."/>
            <person name="Sykes S."/>
            <person name="Schwartz D.C."/>
            <person name="Turgeon B.G."/>
            <person name="Wapinski I."/>
            <person name="Yoder O."/>
            <person name="Young S."/>
            <person name="Zeng Q."/>
            <person name="Zhou S."/>
            <person name="Galagan J."/>
            <person name="Cuomo C.A."/>
            <person name="Kistler H.C."/>
            <person name="Rep M."/>
        </authorList>
    </citation>
    <scope>GENOME REANNOTATION</scope>
    <source>
        <strain>ATCC MYA-4620 / CBS 123657 / FGSC 9075 / NRRL 31084 / PH-1</strain>
    </source>
</reference>
<reference key="3">
    <citation type="journal article" date="2015" name="BMC Genomics">
        <title>The completed genome sequence of the pathogenic ascomycete fungus Fusarium graminearum.</title>
        <authorList>
            <person name="King R."/>
            <person name="Urban M."/>
            <person name="Hammond-Kosack M.C.U."/>
            <person name="Hassani-Pak K."/>
            <person name="Hammond-Kosack K.E."/>
        </authorList>
    </citation>
    <scope>NUCLEOTIDE SEQUENCE [LARGE SCALE GENOMIC DNA]</scope>
    <source>
        <strain>ATCC MYA-4620 / CBS 123657 / FGSC 9075 / NRRL 31084 / PH-1</strain>
    </source>
</reference>
<reference key="4">
    <citation type="journal article" date="2020" name="Nat. Commun.">
        <title>Synthetic biology based construction of biological activity-related library of fungal decalin-containing diterpenoid pyrones.</title>
        <authorList>
            <person name="Tsukada K."/>
            <person name="Shinki S."/>
            <person name="Kaneko A."/>
            <person name="Murakami K."/>
            <person name="Irie K."/>
            <person name="Murai M."/>
            <person name="Miyoshi H."/>
            <person name="Dan S."/>
            <person name="Kawaji K."/>
            <person name="Hayashi H."/>
            <person name="Kodama E.N."/>
            <person name="Hori A."/>
            <person name="Salim E."/>
            <person name="Kuraishi T."/>
            <person name="Hirata N."/>
            <person name="Kanda Y."/>
            <person name="Asai T."/>
        </authorList>
    </citation>
    <scope>FUNCTION</scope>
    <scope>PATHWAY</scope>
    <scope>BIOTECHNOLOGY</scope>
</reference>
<dbReference type="EC" id="2.5.1.-" evidence="7"/>
<dbReference type="EMBL" id="HG970333">
    <property type="protein sequence ID" value="CEF79628.1"/>
    <property type="molecule type" value="Genomic_DNA"/>
</dbReference>
<dbReference type="RefSeq" id="XP_011320988.1">
    <property type="nucleotide sequence ID" value="XM_011322686.1"/>
</dbReference>
<dbReference type="SMR" id="I1RL16"/>
<dbReference type="STRING" id="229533.I1RL16"/>
<dbReference type="GlyCosmos" id="I1RL16">
    <property type="glycosylation" value="1 site, No reported glycans"/>
</dbReference>
<dbReference type="KEGG" id="fgr:FGSG_04593"/>
<dbReference type="VEuPathDB" id="FungiDB:FGRAMPH1_01G15657"/>
<dbReference type="eggNOG" id="KOG1381">
    <property type="taxonomic scope" value="Eukaryota"/>
</dbReference>
<dbReference type="HOGENOM" id="CLU_075330_0_0_1"/>
<dbReference type="InParanoid" id="I1RL16"/>
<dbReference type="OrthoDB" id="87293at110618"/>
<dbReference type="UniPathway" id="UPA00213"/>
<dbReference type="Proteomes" id="UP000070720">
    <property type="component" value="Chromosome 2"/>
</dbReference>
<dbReference type="GO" id="GO:0005886">
    <property type="term" value="C:plasma membrane"/>
    <property type="evidence" value="ECO:0007669"/>
    <property type="project" value="TreeGrafter"/>
</dbReference>
<dbReference type="GO" id="GO:0016765">
    <property type="term" value="F:transferase activity, transferring alkyl or aryl (other than methyl) groups"/>
    <property type="evidence" value="ECO:0007669"/>
    <property type="project" value="InterPro"/>
</dbReference>
<dbReference type="GO" id="GO:0016114">
    <property type="term" value="P:terpenoid biosynthetic process"/>
    <property type="evidence" value="ECO:0007669"/>
    <property type="project" value="UniProtKB-UniPathway"/>
</dbReference>
<dbReference type="CDD" id="cd13959">
    <property type="entry name" value="PT_UbiA_COQ2"/>
    <property type="match status" value="1"/>
</dbReference>
<dbReference type="FunFam" id="1.10.357.140:FF:000008">
    <property type="entry name" value="4-hydroxybenzoate octaprenyltransferase"/>
    <property type="match status" value="1"/>
</dbReference>
<dbReference type="Gene3D" id="1.10.357.140">
    <property type="entry name" value="UbiA prenyltransferase"/>
    <property type="match status" value="1"/>
</dbReference>
<dbReference type="Gene3D" id="1.20.120.1780">
    <property type="entry name" value="UbiA prenyltransferase"/>
    <property type="match status" value="1"/>
</dbReference>
<dbReference type="InterPro" id="IPR039653">
    <property type="entry name" value="Prenyltransferase"/>
</dbReference>
<dbReference type="InterPro" id="IPR000537">
    <property type="entry name" value="UbiA_prenyltransferase"/>
</dbReference>
<dbReference type="InterPro" id="IPR030470">
    <property type="entry name" value="UbiA_prenylTrfase_CS"/>
</dbReference>
<dbReference type="InterPro" id="IPR044878">
    <property type="entry name" value="UbiA_sf"/>
</dbReference>
<dbReference type="PANTHER" id="PTHR11048:SF28">
    <property type="entry name" value="4-HYDROXYBENZOATE POLYPRENYLTRANSFERASE, MITOCHONDRIAL"/>
    <property type="match status" value="1"/>
</dbReference>
<dbReference type="PANTHER" id="PTHR11048">
    <property type="entry name" value="PRENYLTRANSFERASES"/>
    <property type="match status" value="1"/>
</dbReference>
<dbReference type="Pfam" id="PF01040">
    <property type="entry name" value="UbiA"/>
    <property type="match status" value="1"/>
</dbReference>
<dbReference type="PROSITE" id="PS00943">
    <property type="entry name" value="UBIA"/>
    <property type="match status" value="1"/>
</dbReference>
<feature type="chain" id="PRO_0000451534" description="Polyprenyl transferase dpfgC">
    <location>
        <begin position="1"/>
        <end position="330"/>
    </location>
</feature>
<feature type="transmembrane region" description="Helical" evidence="2">
    <location>
        <begin position="105"/>
        <end position="125"/>
    </location>
</feature>
<feature type="transmembrane region" description="Helical" evidence="2">
    <location>
        <begin position="146"/>
        <end position="166"/>
    </location>
</feature>
<feature type="transmembrane region" description="Helical" evidence="2">
    <location>
        <begin position="175"/>
        <end position="192"/>
    </location>
</feature>
<feature type="transmembrane region" description="Helical" evidence="2">
    <location>
        <begin position="199"/>
        <end position="219"/>
    </location>
</feature>
<feature type="transmembrane region" description="Helical" evidence="2">
    <location>
        <begin position="237"/>
        <end position="257"/>
    </location>
</feature>
<feature type="transmembrane region" description="Helical" evidence="2">
    <location>
        <begin position="273"/>
        <end position="293"/>
    </location>
</feature>
<feature type="transmembrane region" description="Helical" evidence="2">
    <location>
        <begin position="310"/>
        <end position="330"/>
    </location>
</feature>
<feature type="glycosylation site" description="N-linked (GlcNAc...) asparagine" evidence="3">
    <location>
        <position position="34"/>
    </location>
</feature>
<name>DPFGC_GIBZE</name>
<accession>I1RL16</accession>
<organism>
    <name type="scientific">Gibberella zeae (strain ATCC MYA-4620 / CBS 123657 / FGSC 9075 / NRRL 31084 / PH-1)</name>
    <name type="common">Wheat head blight fungus</name>
    <name type="synonym">Fusarium graminearum</name>
    <dbReference type="NCBI Taxonomy" id="229533"/>
    <lineage>
        <taxon>Eukaryota</taxon>
        <taxon>Fungi</taxon>
        <taxon>Dikarya</taxon>
        <taxon>Ascomycota</taxon>
        <taxon>Pezizomycotina</taxon>
        <taxon>Sordariomycetes</taxon>
        <taxon>Hypocreomycetidae</taxon>
        <taxon>Hypocreales</taxon>
        <taxon>Nectriaceae</taxon>
        <taxon>Fusarium</taxon>
    </lineage>
</organism>
<sequence>MSRQTDMDPGTYVPDIGGLRFWDMWKEVVFVFVNDTKQKHGGGSETGAGAFFPQYSKYPAMAARSKTKFLGELLILSRFHKYNPVFTTFAGDRTISTAFVFQQTALCVLAAYLFCGAGMVWNDWIDRDIDAKVARTKHRPLAMGSVTTTEAMVWMTLQVIMSWGVLRVMLDNKDVLKHLIPVMVASVLYPFGKRYLARKLMIYPQYILAFTIAWPAIPGRAAICGRHESFTETTRQCLPLCIMVFFWTIYLNTAYSYQDVVDDRKLKVNSFYNIAGNHIHVLLVLLVSPIILAQFDPKQPASGGTLHKSNFILGVWTILACAAEVFLTSA</sequence>
<gene>
    <name evidence="5" type="primary">dpfgC</name>
    <name type="ORF">FG04593</name>
    <name type="ORF">FGRAMPH1_01T15657</name>
</gene>
<protein>
    <recommendedName>
        <fullName evidence="5">Polyprenyl transferase dpfgC</fullName>
        <ecNumber evidence="7">2.5.1.-</ecNumber>
    </recommendedName>
    <alternativeName>
        <fullName evidence="5">Diterpenoid pyrone biosynthesis cluster protein C</fullName>
    </alternativeName>
</protein>
<keyword id="KW-0325">Glycoprotein</keyword>
<keyword id="KW-0472">Membrane</keyword>
<keyword id="KW-1185">Reference proteome</keyword>
<keyword id="KW-0808">Transferase</keyword>
<keyword id="KW-0812">Transmembrane</keyword>
<keyword id="KW-1133">Transmembrane helix</keyword>
<comment type="function">
    <text evidence="4 7">Polyprenyl transferase; part of the gene cluster that mediates the biosynthesis of diterpenoid pyrones (PubMed:32286350). The first step of the pathway is the synthesis of the alpha-pyrone moiety by the polyketide synthase dpfgA via condensation of one acetyl-CoA starter unit with 3 malonyl-CoA units and 2 methylations (Probable). The alpha-pyrone is then combined with geranylgeranyl pyrophosphate (GGPP) formed by the GGPP synthase dpfgD through the action of the prenyltransferase dpfgC to yield a linear alpha-pyrone diterpenoid (Probable). Subsequent steps in the diterpenoid pyrone biosynthetic pathway involve the decalin core formation, which is initiated by the epoxidation of the C10-C11 olefin by the FAD-dependent oxidoreductase dpfgE, and is followed by a cyclization cascade catalyzed by the terpene cyclase dpfgB (Probable). The short chain dehydrogenase/reductase dpfgG then oxidizes the 8S hydroxy group to a ketone and the short chain dehydrogenase/reductase dpfgH reduces the ketone to the 8R hydroxy group to yield higginsianin B (PubMed:32286350). Higginsianin B is further methylated by the methyltransferase dpfgI to produce the intermediate named FDDP B (PubMed:32286350). The cytochrome P450 monooxygenase dfgpJ then catalyzes a three-step oxidation at C-27 to generate a carboxylic acid as well as C-26 hydroxylation (PubMed:32286350). Finally, methyltransferase dpfgK methylates the carboxylic acid generated by dpfgJ, yielding the final diterpenoid pyrones from the pathway which were named FDDP D and FDDP E (PubMed:32286350).</text>
</comment>
<comment type="cofactor">
    <cofactor evidence="1">
        <name>Mg(2+)</name>
        <dbReference type="ChEBI" id="CHEBI:18420"/>
    </cofactor>
</comment>
<comment type="pathway">
    <text evidence="7">Secondary metabolite biosynthesis; terpenoid biosynthesis.</text>
</comment>
<comment type="subcellular location">
    <subcellularLocation>
        <location evidence="2">Membrane</location>
        <topology evidence="2">Multi-pass membrane protein</topology>
    </subcellularLocation>
</comment>
<comment type="biotechnology">
    <text evidence="4">Diterpenoid pyrones display various biological activities and FDDP E shows anti-HIV activity (PubMed:32286350). FDDP D and FDDP E show also inhibitory activity of 42-mer-amyloid beta aggregation that is involved in the pathogenesis of Alzheimer's disease (PubMed:32286350).</text>
</comment>
<comment type="similarity">
    <text evidence="6">Belongs to the UbiA prenyltransferase family.</text>
</comment>